<dbReference type="EC" id="7.1.1.2"/>
<dbReference type="EMBL" id="AF224512">
    <property type="protein sequence ID" value="AAP06804.1"/>
    <property type="molecule type" value="Genomic_DNA"/>
</dbReference>
<dbReference type="EMBL" id="AF224513">
    <property type="protein sequence ID" value="AAP06808.1"/>
    <property type="molecule type" value="Genomic_DNA"/>
</dbReference>
<dbReference type="EMBL" id="AF224514">
    <property type="protein sequence ID" value="AAL25138.1"/>
    <property type="molecule type" value="Genomic_DNA"/>
</dbReference>
<dbReference type="EMBL" id="AF224515">
    <property type="protein sequence ID" value="AAL25142.1"/>
    <property type="molecule type" value="Genomic_DNA"/>
</dbReference>
<dbReference type="EMBL" id="AF224516">
    <property type="protein sequence ID" value="AAL25146.1"/>
    <property type="molecule type" value="Genomic_DNA"/>
</dbReference>
<dbReference type="EMBL" id="AF224517">
    <property type="protein sequence ID" value="AAL25150.1"/>
    <property type="molecule type" value="Genomic_DNA"/>
</dbReference>
<dbReference type="EMBL" id="AF224518">
    <property type="protein sequence ID" value="AAL25154.1"/>
    <property type="molecule type" value="Genomic_DNA"/>
</dbReference>
<dbReference type="EMBL" id="AF224519">
    <property type="protein sequence ID" value="AAN64703.1"/>
    <property type="molecule type" value="Genomic_DNA"/>
</dbReference>
<dbReference type="EMBL" id="AF224520">
    <property type="protein sequence ID" value="AAP06812.1"/>
    <property type="molecule type" value="Genomic_DNA"/>
</dbReference>
<dbReference type="EMBL" id="AF224521">
    <property type="protein sequence ID" value="AAP06816.1"/>
    <property type="molecule type" value="Genomic_DNA"/>
</dbReference>
<dbReference type="RefSeq" id="YP_001661363.1">
    <property type="nucleotide sequence ID" value="NC_010300.1"/>
</dbReference>
<dbReference type="SMR" id="Q7IT44"/>
<dbReference type="GeneID" id="5867442"/>
<dbReference type="CTD" id="4539"/>
<dbReference type="GO" id="GO:0005743">
    <property type="term" value="C:mitochondrial inner membrane"/>
    <property type="evidence" value="ECO:0000250"/>
    <property type="project" value="UniProtKB"/>
</dbReference>
<dbReference type="GO" id="GO:0045271">
    <property type="term" value="C:respiratory chain complex I"/>
    <property type="evidence" value="ECO:0000250"/>
    <property type="project" value="UniProtKB"/>
</dbReference>
<dbReference type="GO" id="GO:0008137">
    <property type="term" value="F:NADH dehydrogenase (ubiquinone) activity"/>
    <property type="evidence" value="ECO:0000250"/>
    <property type="project" value="UniProtKB"/>
</dbReference>
<dbReference type="GO" id="GO:0042773">
    <property type="term" value="P:ATP synthesis coupled electron transport"/>
    <property type="evidence" value="ECO:0007669"/>
    <property type="project" value="InterPro"/>
</dbReference>
<dbReference type="FunFam" id="1.10.287.3510:FF:000002">
    <property type="entry name" value="NADH-ubiquinone oxidoreductase chain 4L"/>
    <property type="match status" value="1"/>
</dbReference>
<dbReference type="Gene3D" id="1.10.287.3510">
    <property type="match status" value="1"/>
</dbReference>
<dbReference type="InterPro" id="IPR001133">
    <property type="entry name" value="NADH_UbQ_OxRdtase_chain4L/K"/>
</dbReference>
<dbReference type="InterPro" id="IPR039428">
    <property type="entry name" value="NUOK/Mnh_C1-like"/>
</dbReference>
<dbReference type="PANTHER" id="PTHR11434:SF0">
    <property type="entry name" value="NADH-UBIQUINONE OXIDOREDUCTASE CHAIN 4L"/>
    <property type="match status" value="1"/>
</dbReference>
<dbReference type="PANTHER" id="PTHR11434">
    <property type="entry name" value="NADH-UBIQUINONE OXIDOREDUCTASE SUBUNIT ND4L"/>
    <property type="match status" value="1"/>
</dbReference>
<dbReference type="Pfam" id="PF00420">
    <property type="entry name" value="Oxidored_q2"/>
    <property type="match status" value="1"/>
</dbReference>
<feature type="chain" id="PRO_0000275018" description="NADH-ubiquinone oxidoreductase chain 4L">
    <location>
        <begin position="1"/>
        <end position="98"/>
    </location>
</feature>
<feature type="transmembrane region" description="Helical" evidence="3">
    <location>
        <begin position="2"/>
        <end position="22"/>
    </location>
</feature>
<feature type="transmembrane region" description="Helical" evidence="3">
    <location>
        <begin position="29"/>
        <end position="49"/>
    </location>
</feature>
<feature type="transmembrane region" description="Helical" evidence="3">
    <location>
        <begin position="61"/>
        <end position="81"/>
    </location>
</feature>
<name>NU4LM_EULMO</name>
<accession>Q7IT44</accession>
<organism>
    <name type="scientific">Eulemur mongoz</name>
    <name type="common">Mongoose lemur</name>
    <dbReference type="NCBI Taxonomy" id="34828"/>
    <lineage>
        <taxon>Eukaryota</taxon>
        <taxon>Metazoa</taxon>
        <taxon>Chordata</taxon>
        <taxon>Craniata</taxon>
        <taxon>Vertebrata</taxon>
        <taxon>Euteleostomi</taxon>
        <taxon>Mammalia</taxon>
        <taxon>Eutheria</taxon>
        <taxon>Euarchontoglires</taxon>
        <taxon>Primates</taxon>
        <taxon>Strepsirrhini</taxon>
        <taxon>Lemuriformes</taxon>
        <taxon>Lemuridae</taxon>
        <taxon>Eulemur</taxon>
    </lineage>
</organism>
<evidence type="ECO:0000250" key="1">
    <source>
        <dbReference type="UniProtKB" id="P03901"/>
    </source>
</evidence>
<evidence type="ECO:0000250" key="2">
    <source>
        <dbReference type="UniProtKB" id="P03902"/>
    </source>
</evidence>
<evidence type="ECO:0000255" key="3"/>
<evidence type="ECO:0000305" key="4"/>
<gene>
    <name type="primary">MT-ND4L</name>
    <name type="synonym">MTND4L</name>
    <name type="synonym">NADH4L</name>
    <name type="synonym">ND4L</name>
</gene>
<reference key="1">
    <citation type="journal article" date="2003" name="Proc. Natl. Acad. Sci. U.S.A.">
        <title>A molecular approach to comparative phylogeography of extant Malagasy lemurs.</title>
        <authorList>
            <person name="Pastorini J."/>
            <person name="Thalmann U."/>
            <person name="Martin R.D."/>
        </authorList>
    </citation>
    <scope>NUCLEOTIDE SEQUENCE [GENOMIC DNA]</scope>
</reference>
<geneLocation type="mitochondrion"/>
<proteinExistence type="inferred from homology"/>
<comment type="function">
    <text evidence="1">Core subunit of the mitochondrial membrane respiratory chain NADH dehydrogenase (Complex I) which catalyzes electron transfer from NADH through the respiratory chain, using ubiquinone as an electron acceptor. Part of the enzyme membrane arm which is embedded in the lipid bilayer and involved in proton translocation.</text>
</comment>
<comment type="catalytic activity">
    <reaction evidence="1">
        <text>a ubiquinone + NADH + 5 H(+)(in) = a ubiquinol + NAD(+) + 4 H(+)(out)</text>
        <dbReference type="Rhea" id="RHEA:29091"/>
        <dbReference type="Rhea" id="RHEA-COMP:9565"/>
        <dbReference type="Rhea" id="RHEA-COMP:9566"/>
        <dbReference type="ChEBI" id="CHEBI:15378"/>
        <dbReference type="ChEBI" id="CHEBI:16389"/>
        <dbReference type="ChEBI" id="CHEBI:17976"/>
        <dbReference type="ChEBI" id="CHEBI:57540"/>
        <dbReference type="ChEBI" id="CHEBI:57945"/>
        <dbReference type="EC" id="7.1.1.2"/>
    </reaction>
    <physiologicalReaction direction="left-to-right" evidence="1">
        <dbReference type="Rhea" id="RHEA:29092"/>
    </physiologicalReaction>
</comment>
<comment type="subunit">
    <text evidence="2">Core subunit of respiratory chain NADH dehydrogenase (Complex I) which is composed of 45 different subunits.</text>
</comment>
<comment type="subcellular location">
    <subcellularLocation>
        <location evidence="2">Mitochondrion inner membrane</location>
        <topology evidence="3">Multi-pass membrane protein</topology>
    </subcellularLocation>
</comment>
<comment type="similarity">
    <text evidence="4">Belongs to the complex I subunit 4L family.</text>
</comment>
<protein>
    <recommendedName>
        <fullName>NADH-ubiquinone oxidoreductase chain 4L</fullName>
        <ecNumber>7.1.1.2</ecNumber>
    </recommendedName>
    <alternativeName>
        <fullName>NADH dehydrogenase subunit 4L</fullName>
    </alternativeName>
</protein>
<keyword id="KW-0249">Electron transport</keyword>
<keyword id="KW-0472">Membrane</keyword>
<keyword id="KW-0496">Mitochondrion</keyword>
<keyword id="KW-0999">Mitochondrion inner membrane</keyword>
<keyword id="KW-0520">NAD</keyword>
<keyword id="KW-0679">Respiratory chain</keyword>
<keyword id="KW-1278">Translocase</keyword>
<keyword id="KW-0812">Transmembrane</keyword>
<keyword id="KW-1133">Transmembrane helix</keyword>
<keyword id="KW-0813">Transport</keyword>
<keyword id="KW-0830">Ubiquinone</keyword>
<sequence length="98" mass="10717">MPSISTNIILAFITALLGMLIFRSHLMSSLLCLEGMMLSMFILSTLTILNLHFTASFMMPILLLVFAACEAAVGLALLVTVSNTYGLDYIQNLNLLQC</sequence>